<protein>
    <recommendedName>
        <fullName>Scaffold protein</fullName>
    </recommendedName>
    <alternativeName>
        <fullName>62 kDa protein</fullName>
    </alternativeName>
    <alternativeName>
        <fullName>D13 ortholog</fullName>
    </alternativeName>
    <alternativeName>
        <fullName>N3L protein</fullName>
    </alternativeName>
    <alternativeName>
        <fullName>Rifampicin resistance protein</fullName>
    </alternativeName>
</protein>
<evidence type="ECO:0000250" key="1"/>
<evidence type="ECO:0000305" key="2"/>
<proteinExistence type="inferred from homology"/>
<feature type="chain" id="PRO_0000099129" description="Scaffold protein">
    <location>
        <begin position="1"/>
        <end position="552"/>
    </location>
</feature>
<comment type="function">
    <text evidence="1">Scaffold protein which forms a transitory spherical honeycomb lattice providing curvature and rigidity to the convex membrane of crescent and immature virions (IV). This association occurs concomitantly with viral membrane formation. Targeted by the drug rifampicin, which prevents the formation of this lattice, and hence virus morphogenesis. In the presence of rifampicin, irregularly shaped membranes that lack the honeycomb layer accumulate around areas of electron-dense viroplasm. This layer is lost from virions during maturation from IV to mature virion (MV), through the proteolysis of A17 N-terminus (By similarity).</text>
</comment>
<comment type="subunit">
    <text evidence="1">Homotrimer (By similarity). Self-assembles to form a layer. Interacts with A17 (via N-terminus); this interaction is necessary for D13 association with membranes (By similarity).</text>
</comment>
<comment type="subcellular location">
    <subcellularLocation>
        <location>Membrane</location>
        <topology>Peripheral membrane protein</topology>
    </subcellularLocation>
    <text evidence="1">Associates transitorily with crescent and IV membranes.</text>
</comment>
<comment type="miscellaneous">
    <text>Displays structure similarities to capsid proteins.</text>
</comment>
<comment type="similarity">
    <text evidence="2">Belongs to the poxviridae protein D13 family.</text>
</comment>
<comment type="sequence caution" evidence="2">
    <conflict type="erroneous gene model prediction">
        <sequence resource="EMBL-CDS" id="AAF44394"/>
    </conflict>
</comment>
<keyword id="KW-0472">Membrane</keyword>
<keyword id="KW-1185">Reference proteome</keyword>
<name>D13_FOWPN</name>
<dbReference type="EMBL" id="AF198100">
    <property type="protein sequence ID" value="AAF44394.1"/>
    <property type="status" value="ALT_SEQ"/>
    <property type="molecule type" value="Genomic_DNA"/>
</dbReference>
<dbReference type="PIR" id="S42253">
    <property type="entry name" value="S42253"/>
</dbReference>
<dbReference type="SMR" id="P0DTA5"/>
<dbReference type="Proteomes" id="UP000008597">
    <property type="component" value="Segment"/>
</dbReference>
<dbReference type="GO" id="GO:0016020">
    <property type="term" value="C:membrane"/>
    <property type="evidence" value="ECO:0007669"/>
    <property type="project" value="UniProtKB-SubCell"/>
</dbReference>
<dbReference type="GO" id="GO:0046677">
    <property type="term" value="P:response to antibiotic"/>
    <property type="evidence" value="ECO:0007669"/>
    <property type="project" value="InterPro"/>
</dbReference>
<dbReference type="Gene3D" id="2.70.9.10">
    <property type="entry name" value="Adenovirus Type 2 Hexon, domain 4"/>
    <property type="match status" value="1"/>
</dbReference>
<dbReference type="InterPro" id="IPR005008">
    <property type="entry name" value="Poxvirus_Rif-R"/>
</dbReference>
<dbReference type="Pfam" id="PF03340">
    <property type="entry name" value="Pox_Rif"/>
    <property type="match status" value="1"/>
</dbReference>
<accession>P0DTA5</accession>
<accession>O72909</accession>
<accession>Q70HA0</accession>
<accession>Q9J5F4</accession>
<reference key="1">
    <citation type="journal article" date="2000" name="J. Virol.">
        <title>The genome of fowlpox virus.</title>
        <authorList>
            <person name="Afonso C.L."/>
            <person name="Tulman E.R."/>
            <person name="Lu Z."/>
            <person name="Zsak L."/>
            <person name="Kutish G.F."/>
            <person name="Rock D.L."/>
        </authorList>
    </citation>
    <scope>NUCLEOTIDE SEQUENCE [LARGE SCALE GENOMIC DNA]</scope>
</reference>
<organismHost>
    <name type="scientific">Vertebrata</name>
    <dbReference type="NCBI Taxonomy" id="7742"/>
</organismHost>
<gene>
    <name type="ordered locus">FPV050</name>
    <name type="ordered locus">fp9.050</name>
    <name type="ORF">FP-D13</name>
    <name type="ORF">FPD13</name>
</gene>
<organism>
    <name type="scientific">Fowlpox virus (strain NVSL)</name>
    <name type="common">FPV</name>
    <dbReference type="NCBI Taxonomy" id="928301"/>
    <lineage>
        <taxon>Viruses</taxon>
        <taxon>Varidnaviria</taxon>
        <taxon>Bamfordvirae</taxon>
        <taxon>Nucleocytoviricota</taxon>
        <taxon>Pokkesviricetes</taxon>
        <taxon>Chitovirales</taxon>
        <taxon>Poxviridae</taxon>
        <taxon>Chordopoxvirinae</taxon>
        <taxon>Avipoxvirus</taxon>
        <taxon>Fowlpox virus</taxon>
    </lineage>
</organism>
<sequence>MNNSIISSVINSIDSSSKRTNIFSFDVQQPTAYMPQYISVNGYHNKKDNDANQVCSVSFDIRDQHIAAINYFFISIQLPEVSGEGKFAYVPYVGYKCIQHVAITCGDITIWETDGEELFDKCVDDKIASLSGYSPELNDISTGYTPNDTIKDPTTLYVYIKSPFDADKTISSLKLVNNKITVTITFRSINDVIVYDSKFQVERFVKDFVYSTELHLIAYAVSDIKPKSAYIELDRRVVSCSSTPTPIPVISDVYACTAMSVYVKPYYGMMENKFISYPGYKQTESDYVRCMVNRLLDDLVVVADTVPKGFPSTATFVKVPVDGQINLQDVDIIVKIDNVPDDKDIYYHTNLLIFGTRKNSFVYNISKKFSSIIGMYSPNTDSINFSKVNHTISITDASIPVSFWVSQKNVYQGDNRSNYSKSKDLVVNDPFRKGIDMVNKTDVISRLEVRFGNDPIYSEISPITKVFNMLLTGSSINMRKIIFNMNPANIFRPTTLNANTKRGKDKLTVRISYIDTDPNNPIHYVAKQLVVICTDLYRIDYDGNINITKITE</sequence>